<name>URE1_RHOP2</name>
<keyword id="KW-0963">Cytoplasm</keyword>
<keyword id="KW-0378">Hydrolase</keyword>
<keyword id="KW-0479">Metal-binding</keyword>
<keyword id="KW-0533">Nickel</keyword>
<keyword id="KW-1185">Reference proteome</keyword>
<protein>
    <recommendedName>
        <fullName evidence="1">Urease subunit alpha</fullName>
        <ecNumber evidence="1">3.5.1.5</ecNumber>
    </recommendedName>
    <alternativeName>
        <fullName evidence="1">Urea amidohydrolase subunit alpha</fullName>
    </alternativeName>
</protein>
<feature type="chain" id="PRO_0000239885" description="Urease subunit alpha">
    <location>
        <begin position="1"/>
        <end position="570"/>
    </location>
</feature>
<feature type="domain" description="Urease" evidence="1">
    <location>
        <begin position="131"/>
        <end position="570"/>
    </location>
</feature>
<feature type="active site" description="Proton donor" evidence="1">
    <location>
        <position position="322"/>
    </location>
</feature>
<feature type="binding site" evidence="1">
    <location>
        <position position="136"/>
    </location>
    <ligand>
        <name>Ni(2+)</name>
        <dbReference type="ChEBI" id="CHEBI:49786"/>
        <label>1</label>
    </ligand>
</feature>
<feature type="binding site" evidence="1">
    <location>
        <position position="138"/>
    </location>
    <ligand>
        <name>Ni(2+)</name>
        <dbReference type="ChEBI" id="CHEBI:49786"/>
        <label>1</label>
    </ligand>
</feature>
<feature type="binding site" description="via carbamate group" evidence="1">
    <location>
        <position position="219"/>
    </location>
    <ligand>
        <name>Ni(2+)</name>
        <dbReference type="ChEBI" id="CHEBI:49786"/>
        <label>1</label>
    </ligand>
</feature>
<feature type="binding site" description="via carbamate group" evidence="1">
    <location>
        <position position="219"/>
    </location>
    <ligand>
        <name>Ni(2+)</name>
        <dbReference type="ChEBI" id="CHEBI:49786"/>
        <label>2</label>
    </ligand>
</feature>
<feature type="binding site" evidence="1">
    <location>
        <position position="221"/>
    </location>
    <ligand>
        <name>substrate</name>
    </ligand>
</feature>
<feature type="binding site" evidence="1">
    <location>
        <position position="248"/>
    </location>
    <ligand>
        <name>Ni(2+)</name>
        <dbReference type="ChEBI" id="CHEBI:49786"/>
        <label>2</label>
    </ligand>
</feature>
<feature type="binding site" evidence="1">
    <location>
        <position position="274"/>
    </location>
    <ligand>
        <name>Ni(2+)</name>
        <dbReference type="ChEBI" id="CHEBI:49786"/>
        <label>2</label>
    </ligand>
</feature>
<feature type="binding site" evidence="1">
    <location>
        <position position="362"/>
    </location>
    <ligand>
        <name>Ni(2+)</name>
        <dbReference type="ChEBI" id="CHEBI:49786"/>
        <label>1</label>
    </ligand>
</feature>
<feature type="modified residue" description="N6-carboxylysine" evidence="1">
    <location>
        <position position="219"/>
    </location>
</feature>
<accession>Q2IZ49</accession>
<comment type="catalytic activity">
    <reaction evidence="1">
        <text>urea + 2 H2O + H(+) = hydrogencarbonate + 2 NH4(+)</text>
        <dbReference type="Rhea" id="RHEA:20557"/>
        <dbReference type="ChEBI" id="CHEBI:15377"/>
        <dbReference type="ChEBI" id="CHEBI:15378"/>
        <dbReference type="ChEBI" id="CHEBI:16199"/>
        <dbReference type="ChEBI" id="CHEBI:17544"/>
        <dbReference type="ChEBI" id="CHEBI:28938"/>
        <dbReference type="EC" id="3.5.1.5"/>
    </reaction>
</comment>
<comment type="cofactor">
    <cofactor evidence="1">
        <name>Ni cation</name>
        <dbReference type="ChEBI" id="CHEBI:25516"/>
    </cofactor>
    <text evidence="1">Binds 2 nickel ions per subunit.</text>
</comment>
<comment type="pathway">
    <text evidence="1">Nitrogen metabolism; urea degradation; CO(2) and NH(3) from urea (urease route): step 1/1.</text>
</comment>
<comment type="subunit">
    <text evidence="1">Heterotrimer of UreA (gamma), UreB (beta) and UreC (alpha) subunits. Three heterotrimers associate to form the active enzyme.</text>
</comment>
<comment type="subcellular location">
    <subcellularLocation>
        <location evidence="1">Cytoplasm</location>
    </subcellularLocation>
</comment>
<comment type="PTM">
    <text evidence="1">Carboxylation allows a single lysine to coordinate two nickel ions.</text>
</comment>
<comment type="similarity">
    <text evidence="1">Belongs to the metallo-dependent hydrolases superfamily. Urease alpha subunit family.</text>
</comment>
<dbReference type="EC" id="3.5.1.5" evidence="1"/>
<dbReference type="EMBL" id="CP000250">
    <property type="protein sequence ID" value="ABD06511.1"/>
    <property type="molecule type" value="Genomic_DNA"/>
</dbReference>
<dbReference type="RefSeq" id="WP_011440699.1">
    <property type="nucleotide sequence ID" value="NC_007778.1"/>
</dbReference>
<dbReference type="SMR" id="Q2IZ49"/>
<dbReference type="STRING" id="316058.RPB_1803"/>
<dbReference type="MEROPS" id="M38.982"/>
<dbReference type="KEGG" id="rpb:RPB_1803"/>
<dbReference type="eggNOG" id="COG0804">
    <property type="taxonomic scope" value="Bacteria"/>
</dbReference>
<dbReference type="HOGENOM" id="CLU_000980_0_0_5"/>
<dbReference type="OrthoDB" id="9802793at2"/>
<dbReference type="UniPathway" id="UPA00258">
    <property type="reaction ID" value="UER00370"/>
</dbReference>
<dbReference type="Proteomes" id="UP000008809">
    <property type="component" value="Chromosome"/>
</dbReference>
<dbReference type="GO" id="GO:0005737">
    <property type="term" value="C:cytoplasm"/>
    <property type="evidence" value="ECO:0007669"/>
    <property type="project" value="UniProtKB-SubCell"/>
</dbReference>
<dbReference type="GO" id="GO:0016151">
    <property type="term" value="F:nickel cation binding"/>
    <property type="evidence" value="ECO:0007669"/>
    <property type="project" value="UniProtKB-UniRule"/>
</dbReference>
<dbReference type="GO" id="GO:0009039">
    <property type="term" value="F:urease activity"/>
    <property type="evidence" value="ECO:0007669"/>
    <property type="project" value="UniProtKB-UniRule"/>
</dbReference>
<dbReference type="GO" id="GO:0043419">
    <property type="term" value="P:urea catabolic process"/>
    <property type="evidence" value="ECO:0007669"/>
    <property type="project" value="UniProtKB-UniRule"/>
</dbReference>
<dbReference type="CDD" id="cd00375">
    <property type="entry name" value="Urease_alpha"/>
    <property type="match status" value="1"/>
</dbReference>
<dbReference type="Gene3D" id="3.20.20.140">
    <property type="entry name" value="Metal-dependent hydrolases"/>
    <property type="match status" value="1"/>
</dbReference>
<dbReference type="Gene3D" id="2.30.40.10">
    <property type="entry name" value="Urease, subunit C, domain 1"/>
    <property type="match status" value="1"/>
</dbReference>
<dbReference type="HAMAP" id="MF_01953">
    <property type="entry name" value="Urease_alpha"/>
    <property type="match status" value="1"/>
</dbReference>
<dbReference type="InterPro" id="IPR006680">
    <property type="entry name" value="Amidohydro-rel"/>
</dbReference>
<dbReference type="InterPro" id="IPR011059">
    <property type="entry name" value="Metal-dep_hydrolase_composite"/>
</dbReference>
<dbReference type="InterPro" id="IPR032466">
    <property type="entry name" value="Metal_Hydrolase"/>
</dbReference>
<dbReference type="InterPro" id="IPR011612">
    <property type="entry name" value="Urease_alpha_N_dom"/>
</dbReference>
<dbReference type="InterPro" id="IPR050112">
    <property type="entry name" value="Urease_alpha_subunit"/>
</dbReference>
<dbReference type="InterPro" id="IPR017950">
    <property type="entry name" value="Urease_AS"/>
</dbReference>
<dbReference type="InterPro" id="IPR005848">
    <property type="entry name" value="Urease_asu"/>
</dbReference>
<dbReference type="InterPro" id="IPR017951">
    <property type="entry name" value="Urease_asu_c"/>
</dbReference>
<dbReference type="InterPro" id="IPR029754">
    <property type="entry name" value="Urease_Ni-bd"/>
</dbReference>
<dbReference type="NCBIfam" id="NF009685">
    <property type="entry name" value="PRK13206.1"/>
    <property type="match status" value="1"/>
</dbReference>
<dbReference type="NCBIfam" id="NF009686">
    <property type="entry name" value="PRK13207.1"/>
    <property type="match status" value="1"/>
</dbReference>
<dbReference type="NCBIfam" id="TIGR01792">
    <property type="entry name" value="urease_alph"/>
    <property type="match status" value="1"/>
</dbReference>
<dbReference type="PANTHER" id="PTHR43440">
    <property type="entry name" value="UREASE"/>
    <property type="match status" value="1"/>
</dbReference>
<dbReference type="PANTHER" id="PTHR43440:SF1">
    <property type="entry name" value="UREASE"/>
    <property type="match status" value="1"/>
</dbReference>
<dbReference type="Pfam" id="PF01979">
    <property type="entry name" value="Amidohydro_1"/>
    <property type="match status" value="1"/>
</dbReference>
<dbReference type="Pfam" id="PF00449">
    <property type="entry name" value="Urease_alpha"/>
    <property type="match status" value="1"/>
</dbReference>
<dbReference type="PRINTS" id="PR01752">
    <property type="entry name" value="UREASE"/>
</dbReference>
<dbReference type="SUPFAM" id="SSF51338">
    <property type="entry name" value="Composite domain of metallo-dependent hydrolases"/>
    <property type="match status" value="2"/>
</dbReference>
<dbReference type="SUPFAM" id="SSF51556">
    <property type="entry name" value="Metallo-dependent hydrolases"/>
    <property type="match status" value="1"/>
</dbReference>
<dbReference type="PROSITE" id="PS01120">
    <property type="entry name" value="UREASE_1"/>
    <property type="match status" value="1"/>
</dbReference>
<dbReference type="PROSITE" id="PS00145">
    <property type="entry name" value="UREASE_2"/>
    <property type="match status" value="1"/>
</dbReference>
<dbReference type="PROSITE" id="PS51368">
    <property type="entry name" value="UREASE_3"/>
    <property type="match status" value="1"/>
</dbReference>
<reference key="1">
    <citation type="submission" date="2006-01" db="EMBL/GenBank/DDBJ databases">
        <title>Complete sequence of Rhodopseudomonas palustris HaA2.</title>
        <authorList>
            <consortium name="US DOE Joint Genome Institute"/>
            <person name="Copeland A."/>
            <person name="Lucas S."/>
            <person name="Lapidus A."/>
            <person name="Barry K."/>
            <person name="Detter J.C."/>
            <person name="Glavina T."/>
            <person name="Hammon N."/>
            <person name="Israni S."/>
            <person name="Pitluck S."/>
            <person name="Chain P."/>
            <person name="Malfatti S."/>
            <person name="Shin M."/>
            <person name="Vergez L."/>
            <person name="Schmutz J."/>
            <person name="Larimer F."/>
            <person name="Land M."/>
            <person name="Hauser L."/>
            <person name="Pelletier D.A."/>
            <person name="Kyrpides N."/>
            <person name="Anderson I."/>
            <person name="Oda Y."/>
            <person name="Harwood C.S."/>
            <person name="Richardson P."/>
        </authorList>
    </citation>
    <scope>NUCLEOTIDE SEQUENCE [LARGE SCALE GENOMIC DNA]</scope>
    <source>
        <strain>HaA2</strain>
    </source>
</reference>
<proteinExistence type="inferred from homology"/>
<gene>
    <name evidence="1" type="primary">ureC</name>
    <name type="ordered locus">RPB_1803</name>
</gene>
<organism>
    <name type="scientific">Rhodopseudomonas palustris (strain HaA2)</name>
    <dbReference type="NCBI Taxonomy" id="316058"/>
    <lineage>
        <taxon>Bacteria</taxon>
        <taxon>Pseudomonadati</taxon>
        <taxon>Pseudomonadota</taxon>
        <taxon>Alphaproteobacteria</taxon>
        <taxon>Hyphomicrobiales</taxon>
        <taxon>Nitrobacteraceae</taxon>
        <taxon>Rhodopseudomonas</taxon>
    </lineage>
</organism>
<evidence type="ECO:0000255" key="1">
    <source>
        <dbReference type="HAMAP-Rule" id="MF_01953"/>
    </source>
</evidence>
<sequence>MSTRISRSVYADMFGPTTGDRVRLADTDLIIEVEKDYTTYGEEVKFGGGKVIRDGMGQSQVTNKDGAADTVITNAVVVDHWGIVKADVAIKAGMIHAIGKAGNPDIQPNVDIIIGPGTDIIAGEGKILTAGGFDSHIHFICPQQIEHALMSGVTTMLGGGTGPSHGTFATTCTPGPWHIGRMIQSFDAFPVNLGISGKGNAALPGALIEMVEGGACALKLHEDWGTTPAAIDNCLTVADDHDVQVMIHSDTLNESGFVEDTIKAFKGRTIHAFHTEGAGGGHAPDIIKVAGLANVLPSSTNPTRPFTRNTIDEHLDMLMVCHHLDPSIAEDLAFAESRIRKETIAAEDILHDLGALSMMSSDSQAMGRLGEVIIRTWQTADKMKKQRGSLPQDSSRNDNFRVKRYIAKYTINPSIAHGVSKLIGSVETGKMADLVLWSPAFFGVKPDCIIKAGMIVAAPMGDPNASIPTPQPVHYQPMFGAYGRALTASSVVFTSQAAAAGPLARDLGIAKALYPVSNVRGGISKKSMIHNDATPTIEVDPETYEVRADGELLTCAPAEVLPMAQRYFMY</sequence>